<protein>
    <recommendedName>
        <fullName evidence="1">UPF0145 protein Acid_4599</fullName>
    </recommendedName>
</protein>
<name>Y4599_SOLUE</name>
<dbReference type="EMBL" id="CP000473">
    <property type="protein sequence ID" value="ABJ85558.1"/>
    <property type="molecule type" value="Genomic_DNA"/>
</dbReference>
<dbReference type="SMR" id="Q01XQ7"/>
<dbReference type="FunCoup" id="Q01XQ7">
    <property type="interactions" value="178"/>
</dbReference>
<dbReference type="STRING" id="234267.Acid_4599"/>
<dbReference type="KEGG" id="sus:Acid_4599"/>
<dbReference type="eggNOG" id="COG0393">
    <property type="taxonomic scope" value="Bacteria"/>
</dbReference>
<dbReference type="HOGENOM" id="CLU_117144_1_1_0"/>
<dbReference type="InParanoid" id="Q01XQ7"/>
<dbReference type="OrthoDB" id="9796448at2"/>
<dbReference type="Gene3D" id="3.30.110.70">
    <property type="entry name" value="Hypothetical protein apc22750. Chain B"/>
    <property type="match status" value="1"/>
</dbReference>
<dbReference type="HAMAP" id="MF_00338">
    <property type="entry name" value="UPF0145"/>
    <property type="match status" value="1"/>
</dbReference>
<dbReference type="InterPro" id="IPR035439">
    <property type="entry name" value="UPF0145_dom_sf"/>
</dbReference>
<dbReference type="InterPro" id="IPR002765">
    <property type="entry name" value="UPF0145_YbjQ-like"/>
</dbReference>
<dbReference type="PANTHER" id="PTHR34068:SF2">
    <property type="entry name" value="UPF0145 PROTEIN SCO3412"/>
    <property type="match status" value="1"/>
</dbReference>
<dbReference type="PANTHER" id="PTHR34068">
    <property type="entry name" value="UPF0145 PROTEIN YBJQ"/>
    <property type="match status" value="1"/>
</dbReference>
<dbReference type="Pfam" id="PF01906">
    <property type="entry name" value="YbjQ_1"/>
    <property type="match status" value="1"/>
</dbReference>
<dbReference type="SUPFAM" id="SSF117782">
    <property type="entry name" value="YbjQ-like"/>
    <property type="match status" value="1"/>
</dbReference>
<sequence>MVPHEFVTTAYDLPGYRVTRNFGIVRGIVVRSRSILGTLGAGLQTMVGGNISIFSNLCEQTRSDAFELMIQHAGQLGANAVIGMQYDATEIMQGVTEVLAYGTAVEVVPASK</sequence>
<gene>
    <name type="ordered locus">Acid_4599</name>
</gene>
<proteinExistence type="inferred from homology"/>
<accession>Q01XQ7</accession>
<feature type="chain" id="PRO_1000013030" description="UPF0145 protein Acid_4599">
    <location>
        <begin position="1"/>
        <end position="112"/>
    </location>
</feature>
<evidence type="ECO:0000255" key="1">
    <source>
        <dbReference type="HAMAP-Rule" id="MF_00338"/>
    </source>
</evidence>
<reference key="1">
    <citation type="journal article" date="2009" name="Appl. Environ. Microbiol.">
        <title>Three genomes from the phylum Acidobacteria provide insight into the lifestyles of these microorganisms in soils.</title>
        <authorList>
            <person name="Ward N.L."/>
            <person name="Challacombe J.F."/>
            <person name="Janssen P.H."/>
            <person name="Henrissat B."/>
            <person name="Coutinho P.M."/>
            <person name="Wu M."/>
            <person name="Xie G."/>
            <person name="Haft D.H."/>
            <person name="Sait M."/>
            <person name="Badger J."/>
            <person name="Barabote R.D."/>
            <person name="Bradley B."/>
            <person name="Brettin T.S."/>
            <person name="Brinkac L.M."/>
            <person name="Bruce D."/>
            <person name="Creasy T."/>
            <person name="Daugherty S.C."/>
            <person name="Davidsen T.M."/>
            <person name="DeBoy R.T."/>
            <person name="Detter J.C."/>
            <person name="Dodson R.J."/>
            <person name="Durkin A.S."/>
            <person name="Ganapathy A."/>
            <person name="Gwinn-Giglio M."/>
            <person name="Han C.S."/>
            <person name="Khouri H."/>
            <person name="Kiss H."/>
            <person name="Kothari S.P."/>
            <person name="Madupu R."/>
            <person name="Nelson K.E."/>
            <person name="Nelson W.C."/>
            <person name="Paulsen I."/>
            <person name="Penn K."/>
            <person name="Ren Q."/>
            <person name="Rosovitz M.J."/>
            <person name="Selengut J.D."/>
            <person name="Shrivastava S."/>
            <person name="Sullivan S.A."/>
            <person name="Tapia R."/>
            <person name="Thompson L.S."/>
            <person name="Watkins K.L."/>
            <person name="Yang Q."/>
            <person name="Yu C."/>
            <person name="Zafar N."/>
            <person name="Zhou L."/>
            <person name="Kuske C.R."/>
        </authorList>
    </citation>
    <scope>NUCLEOTIDE SEQUENCE [LARGE SCALE GENOMIC DNA]</scope>
    <source>
        <strain>Ellin6076</strain>
    </source>
</reference>
<comment type="similarity">
    <text evidence="1">Belongs to the UPF0145 family.</text>
</comment>
<organism>
    <name type="scientific">Solibacter usitatus (strain Ellin6076)</name>
    <dbReference type="NCBI Taxonomy" id="234267"/>
    <lineage>
        <taxon>Bacteria</taxon>
        <taxon>Pseudomonadati</taxon>
        <taxon>Acidobacteriota</taxon>
        <taxon>Terriglobia</taxon>
        <taxon>Bryobacterales</taxon>
        <taxon>Solibacteraceae</taxon>
        <taxon>Candidatus Solibacter</taxon>
    </lineage>
</organism>